<feature type="chain" id="PRO_0000201777" description="Lipid A biosynthesis myristoyltransferase">
    <location>
        <begin position="1"/>
        <end position="323"/>
    </location>
</feature>
<feature type="transmembrane region" description="Helical" evidence="1">
    <location>
        <begin position="23"/>
        <end position="43"/>
    </location>
</feature>
<feature type="short sequence motif" description="HXXXXD motif" evidence="1 6">
    <location>
        <begin position="139"/>
        <end position="144"/>
    </location>
</feature>
<gene>
    <name evidence="1 4" type="primary">lpxM</name>
    <name evidence="5" type="synonym">msbB</name>
    <name type="ordered locus">b1855</name>
    <name type="ordered locus">JW1844</name>
</gene>
<proteinExistence type="evidence at protein level"/>
<protein>
    <recommendedName>
        <fullName evidence="1 6">Lipid A biosynthesis myristoyltransferase</fullName>
        <ecNumber evidence="1 3 7">2.3.1.243</ecNumber>
    </recommendedName>
    <alternativeName>
        <fullName evidence="1">Kdo(2)-lauroyl-lipid IV(A) myristoyltransferase</fullName>
    </alternativeName>
</protein>
<dbReference type="EC" id="2.3.1.243" evidence="1 3 7"/>
<dbReference type="EMBL" id="M77039">
    <property type="protein sequence ID" value="AAA24181.1"/>
    <property type="molecule type" value="Genomic_DNA"/>
</dbReference>
<dbReference type="EMBL" id="M87660">
    <property type="protein sequence ID" value="AAA96706.1"/>
    <property type="molecule type" value="Genomic_DNA"/>
</dbReference>
<dbReference type="EMBL" id="U00096">
    <property type="protein sequence ID" value="AAC74925.1"/>
    <property type="molecule type" value="Genomic_DNA"/>
</dbReference>
<dbReference type="EMBL" id="AP009048">
    <property type="protein sequence ID" value="BAA15663.1"/>
    <property type="molecule type" value="Genomic_DNA"/>
</dbReference>
<dbReference type="PIR" id="A42608">
    <property type="entry name" value="A42608"/>
</dbReference>
<dbReference type="RefSeq" id="NP_416369.1">
    <property type="nucleotide sequence ID" value="NC_000913.3"/>
</dbReference>
<dbReference type="RefSeq" id="WP_000448381.1">
    <property type="nucleotide sequence ID" value="NZ_STEB01000009.1"/>
</dbReference>
<dbReference type="SMR" id="P24205"/>
<dbReference type="BioGRID" id="4260351">
    <property type="interactions" value="260"/>
</dbReference>
<dbReference type="DIP" id="DIP-10262N"/>
<dbReference type="FunCoup" id="P24205">
    <property type="interactions" value="149"/>
</dbReference>
<dbReference type="IntAct" id="P24205">
    <property type="interactions" value="21"/>
</dbReference>
<dbReference type="STRING" id="511145.b1855"/>
<dbReference type="jPOST" id="P24205"/>
<dbReference type="PaxDb" id="511145-b1855"/>
<dbReference type="EnsemblBacteria" id="AAC74925">
    <property type="protein sequence ID" value="AAC74925"/>
    <property type="gene ID" value="b1855"/>
</dbReference>
<dbReference type="GeneID" id="93776129"/>
<dbReference type="GeneID" id="945143"/>
<dbReference type="KEGG" id="ecj:JW1844"/>
<dbReference type="KEGG" id="eco:b1855"/>
<dbReference type="KEGG" id="ecoc:C3026_10570"/>
<dbReference type="PATRIC" id="fig|511145.12.peg.1934"/>
<dbReference type="EchoBASE" id="EB0609"/>
<dbReference type="eggNOG" id="COG1560">
    <property type="taxonomic scope" value="Bacteria"/>
</dbReference>
<dbReference type="HOGENOM" id="CLU_049421_1_0_6"/>
<dbReference type="InParanoid" id="P24205"/>
<dbReference type="OMA" id="QMFATAP"/>
<dbReference type="OrthoDB" id="9803456at2"/>
<dbReference type="PhylomeDB" id="P24205"/>
<dbReference type="BioCyc" id="EcoCyc:MYRISTOYLACYLTRAN-MONOMER"/>
<dbReference type="BioCyc" id="MetaCyc:MYRISTOYLACYLTRAN-MONOMER"/>
<dbReference type="BRENDA" id="2.3.1.243">
    <property type="organism ID" value="2026"/>
</dbReference>
<dbReference type="UniPathway" id="UPA00030"/>
<dbReference type="UniPathway" id="UPA00360">
    <property type="reaction ID" value="UER00486"/>
</dbReference>
<dbReference type="PRO" id="PR:P24205"/>
<dbReference type="Proteomes" id="UP000000625">
    <property type="component" value="Chromosome"/>
</dbReference>
<dbReference type="GO" id="GO:0009276">
    <property type="term" value="C:Gram-negative-bacterium-type cell wall"/>
    <property type="evidence" value="ECO:0007669"/>
    <property type="project" value="InterPro"/>
</dbReference>
<dbReference type="GO" id="GO:0016020">
    <property type="term" value="C:membrane"/>
    <property type="evidence" value="ECO:0000318"/>
    <property type="project" value="GO_Central"/>
</dbReference>
<dbReference type="GO" id="GO:0005886">
    <property type="term" value="C:plasma membrane"/>
    <property type="evidence" value="ECO:0007669"/>
    <property type="project" value="UniProtKB-SubCell"/>
</dbReference>
<dbReference type="GO" id="GO:0016746">
    <property type="term" value="F:acyltransferase activity"/>
    <property type="evidence" value="ECO:0000318"/>
    <property type="project" value="GO_Central"/>
</dbReference>
<dbReference type="GO" id="GO:0016747">
    <property type="term" value="F:acyltransferase activity, transferring groups other than amino-acyl groups"/>
    <property type="evidence" value="ECO:0000314"/>
    <property type="project" value="EcoCyc"/>
</dbReference>
<dbReference type="GO" id="GO:0019107">
    <property type="term" value="F:myristoyltransferase activity"/>
    <property type="evidence" value="ECO:0007669"/>
    <property type="project" value="UniProtKB-UniRule"/>
</dbReference>
<dbReference type="GO" id="GO:0009247">
    <property type="term" value="P:glycolipid biosynthetic process"/>
    <property type="evidence" value="ECO:0000318"/>
    <property type="project" value="GO_Central"/>
</dbReference>
<dbReference type="GO" id="GO:0036104">
    <property type="term" value="P:Kdo2-lipid A biosynthetic process"/>
    <property type="evidence" value="ECO:0000314"/>
    <property type="project" value="EcoCyc"/>
</dbReference>
<dbReference type="GO" id="GO:0009103">
    <property type="term" value="P:lipopolysaccharide biosynthetic process"/>
    <property type="evidence" value="ECO:0007669"/>
    <property type="project" value="UniProtKB-UniRule"/>
</dbReference>
<dbReference type="CDD" id="cd07984">
    <property type="entry name" value="LPLAT_LABLAT-like"/>
    <property type="match status" value="1"/>
</dbReference>
<dbReference type="HAMAP" id="MF_01944">
    <property type="entry name" value="Lipid_A_LpxM"/>
    <property type="match status" value="1"/>
</dbReference>
<dbReference type="InterPro" id="IPR004960">
    <property type="entry name" value="LipA_acyltrans"/>
</dbReference>
<dbReference type="InterPro" id="IPR011921">
    <property type="entry name" value="Lipid_A_MsbB"/>
</dbReference>
<dbReference type="NCBIfam" id="TIGR02208">
    <property type="entry name" value="lipid_A_msbB"/>
    <property type="match status" value="1"/>
</dbReference>
<dbReference type="NCBIfam" id="NF006507">
    <property type="entry name" value="PRK08943.1"/>
    <property type="match status" value="1"/>
</dbReference>
<dbReference type="PANTHER" id="PTHR30606">
    <property type="entry name" value="LIPID A BIOSYNTHESIS LAUROYL ACYLTRANSFERASE"/>
    <property type="match status" value="1"/>
</dbReference>
<dbReference type="PANTHER" id="PTHR30606:SF4">
    <property type="entry name" value="LIPID A BIOSYNTHESIS MYRISTOYLTRANSFERASE"/>
    <property type="match status" value="1"/>
</dbReference>
<dbReference type="Pfam" id="PF03279">
    <property type="entry name" value="Lip_A_acyltrans"/>
    <property type="match status" value="1"/>
</dbReference>
<dbReference type="PIRSF" id="PIRSF026649">
    <property type="entry name" value="MsbB"/>
    <property type="match status" value="1"/>
</dbReference>
<evidence type="ECO:0000255" key="1">
    <source>
        <dbReference type="HAMAP-Rule" id="MF_01944"/>
    </source>
</evidence>
<evidence type="ECO:0000269" key="2">
    <source>
    </source>
</evidence>
<evidence type="ECO:0000269" key="3">
    <source>
    </source>
</evidence>
<evidence type="ECO:0000303" key="4">
    <source>
    </source>
</evidence>
<evidence type="ECO:0000303" key="5">
    <source>
    </source>
</evidence>
<evidence type="ECO:0000305" key="6"/>
<evidence type="ECO:0000305" key="7">
    <source>
    </source>
</evidence>
<evidence type="ECO:0000305" key="8">
    <source>
    </source>
</evidence>
<keyword id="KW-0012">Acyltransferase</keyword>
<keyword id="KW-0997">Cell inner membrane</keyword>
<keyword id="KW-1003">Cell membrane</keyword>
<keyword id="KW-0448">Lipopolysaccharide biosynthesis</keyword>
<keyword id="KW-0472">Membrane</keyword>
<keyword id="KW-1185">Reference proteome</keyword>
<keyword id="KW-0808">Transferase</keyword>
<keyword id="KW-0812">Transmembrane</keyword>
<keyword id="KW-1133">Transmembrane helix</keyword>
<accession>P24205</accession>
<organism>
    <name type="scientific">Escherichia coli (strain K12)</name>
    <dbReference type="NCBI Taxonomy" id="83333"/>
    <lineage>
        <taxon>Bacteria</taxon>
        <taxon>Pseudomonadati</taxon>
        <taxon>Pseudomonadota</taxon>
        <taxon>Gammaproteobacteria</taxon>
        <taxon>Enterobacterales</taxon>
        <taxon>Enterobacteriaceae</taxon>
        <taxon>Escherichia</taxon>
    </lineage>
</organism>
<name>LPXM_ECOLI</name>
<comment type="function">
    <text evidence="3 7">Catalyzes the transfer of myristate from myristoyl-[acyl-carrier-protein] (ACP) to Kdo(2)-(lauroyl)-lipid IV(A) to form Kdo(2)-lipid A. Can probably also catalyze the transfer of myristate to Kdo(2)-(palmitoleoyl)-lipid IV(A) to form the cold-adapted Kdo(2)-lipid A. In vitro, can acylate Kdo(2)-lipid IV(A), but acylation of (KDO)2-(lauroyl)-lipid IV(A) is about 100 times faster. In vitro, can use lauroyl-ACP but displays a slight kinetic preference for myristoyl-ACP.</text>
</comment>
<comment type="catalytic activity">
    <reaction evidence="1 3">
        <text>alpha-Kdo-(2-&gt;4)-alpha-Kdo-(2-&gt;6)-(dodecanoyl)-lipid IVA (E. coli) + tetradecanoyl-[ACP] = alpha-Kdo-(2-&gt;4)-alpha-Kdo-(2-&gt;6)-lipid A (E. coli) + holo-[ACP]</text>
        <dbReference type="Rhea" id="RHEA:28438"/>
        <dbReference type="Rhea" id="RHEA-COMP:9648"/>
        <dbReference type="Rhea" id="RHEA-COMP:9685"/>
        <dbReference type="ChEBI" id="CHEBI:58540"/>
        <dbReference type="ChEBI" id="CHEBI:61524"/>
        <dbReference type="ChEBI" id="CHEBI:64479"/>
        <dbReference type="ChEBI" id="CHEBI:78477"/>
        <dbReference type="EC" id="2.3.1.243"/>
    </reaction>
</comment>
<comment type="catalytic activity">
    <reaction evidence="7">
        <text>(9Z)-hexadecenoyl-(Kdo)2-lipid IVA (E. coli) + tetradecanoyl-[ACP] = ((9Z)-hexadecenoyl-tetradecanoyl)-(Kdo)2-lipid A + holo-[ACP]</text>
        <dbReference type="Rhea" id="RHEA:28434"/>
        <dbReference type="Rhea" id="RHEA-COMP:9648"/>
        <dbReference type="Rhea" id="RHEA-COMP:9685"/>
        <dbReference type="ChEBI" id="CHEBI:61520"/>
        <dbReference type="ChEBI" id="CHEBI:61522"/>
        <dbReference type="ChEBI" id="CHEBI:64479"/>
        <dbReference type="ChEBI" id="CHEBI:78477"/>
    </reaction>
</comment>
<comment type="pathway">
    <text evidence="1 3 7">Glycolipid biosynthesis; KDO(2)-lipid A biosynthesis; KDO(2)-lipid A from CMP-3-deoxy-D-manno-octulosonate and lipid IV(A): step 4/4.</text>
</comment>
<comment type="pathway">
    <text evidence="1 3 7">Bacterial outer membrane biogenesis; lipopolysaccharide biosynthesis.</text>
</comment>
<comment type="subcellular location">
    <subcellularLocation>
        <location evidence="1 3">Cell inner membrane</location>
        <topology evidence="1">Single-pass membrane protein</topology>
    </subcellularLocation>
</comment>
<comment type="disruption phenotype">
    <text evidence="2">Makes pentaacylated lipid A rather than the usual hexaacylated lipid A.</text>
</comment>
<comment type="similarity">
    <text evidence="1 6">Belongs to the LpxL/LpxM/LpxP family. LpxM subfamily.</text>
</comment>
<comment type="caution">
    <text evidence="8">Was originally thought to be the membrane-bound lytic murein transglycosylase (MLT).</text>
</comment>
<sequence length="323" mass="37410">METKKNNSEYIPEFDKSFRHPRYWGAWLGVAAMAGIALTPPKFRDPILARLGRFAGRLGKSSRRRALINLSLCFPERSEAEREAIVDEMFATAPQAMAMMAELAIRGPEKIQPRVDWQGLEIIEEMRRNNEKVIFLVPHGWAVDIPAMLMASQGQKMAAMFHNQGNPVFDYVWNTVRRRFGGRLHARNDGIKPFIQSVRQGYWGYYLPDQDHGPEHSEFVDFFATYKATLPAIGRLMKVCRARVVPLFPIYDGKTHRLTIQVRPPMDDLLEADDHTIARRMNEEVEIFVGPRPEQYTWILKLLKTRKPGEIQPYKRKDLYPIK</sequence>
<reference key="1">
    <citation type="journal article" date="1992" name="J. Bacteriol.">
        <title>Isolation and characterization of the Escherichia coli msbB gene, a multicopy suppressor of null mutations in the high-temperature requirement gene htrB.</title>
        <authorList>
            <person name="Karow M.L."/>
            <person name="Georgopoulos C."/>
        </authorList>
    </citation>
    <scope>NUCLEOTIDE SEQUENCE [GENOMIC DNA]</scope>
    <source>
        <strain>K12 / W3110 / ATCC 27325 / DSM 5911</strain>
    </source>
</reference>
<reference key="2">
    <citation type="journal article" date="1992" name="J. Bacteriol.">
        <title>Murein-metabolizing enzymes from Escherichia coli: existence of a second lytic transglycosylase.</title>
        <authorList>
            <person name="Engel H."/>
            <person name="Smink A.J."/>
            <person name="van Wijngaarden L."/>
            <person name="Keck W."/>
        </authorList>
    </citation>
    <scope>NUCLEOTIDE SEQUENCE [GENOMIC DNA]</scope>
    <source>
        <strain>K12</strain>
    </source>
</reference>
<reference key="3">
    <citation type="journal article" date="1996" name="DNA Res.">
        <title>A 460-kb DNA sequence of the Escherichia coli K-12 genome corresponding to the 40.1-50.0 min region on the linkage map.</title>
        <authorList>
            <person name="Itoh T."/>
            <person name="Aiba H."/>
            <person name="Baba T."/>
            <person name="Fujita K."/>
            <person name="Hayashi K."/>
            <person name="Inada T."/>
            <person name="Isono K."/>
            <person name="Kasai H."/>
            <person name="Kimura S."/>
            <person name="Kitakawa M."/>
            <person name="Kitagawa M."/>
            <person name="Makino K."/>
            <person name="Miki T."/>
            <person name="Mizobuchi K."/>
            <person name="Mori H."/>
            <person name="Mori T."/>
            <person name="Motomura K."/>
            <person name="Nakade S."/>
            <person name="Nakamura Y."/>
            <person name="Nashimoto H."/>
            <person name="Nishio Y."/>
            <person name="Oshima T."/>
            <person name="Saito N."/>
            <person name="Sampei G."/>
            <person name="Seki Y."/>
            <person name="Sivasundaram S."/>
            <person name="Tagami H."/>
            <person name="Takeda J."/>
            <person name="Takemoto K."/>
            <person name="Wada C."/>
            <person name="Yamamoto Y."/>
            <person name="Horiuchi T."/>
        </authorList>
    </citation>
    <scope>NUCLEOTIDE SEQUENCE [LARGE SCALE GENOMIC DNA]</scope>
    <source>
        <strain>K12 / W3110 / ATCC 27325 / DSM 5911</strain>
    </source>
</reference>
<reference key="4">
    <citation type="journal article" date="1997" name="Science">
        <title>The complete genome sequence of Escherichia coli K-12.</title>
        <authorList>
            <person name="Blattner F.R."/>
            <person name="Plunkett G. III"/>
            <person name="Bloch C.A."/>
            <person name="Perna N.T."/>
            <person name="Burland V."/>
            <person name="Riley M."/>
            <person name="Collado-Vides J."/>
            <person name="Glasner J.D."/>
            <person name="Rode C.K."/>
            <person name="Mayhew G.F."/>
            <person name="Gregor J."/>
            <person name="Davis N.W."/>
            <person name="Kirkpatrick H.A."/>
            <person name="Goeden M.A."/>
            <person name="Rose D.J."/>
            <person name="Mau B."/>
            <person name="Shao Y."/>
        </authorList>
    </citation>
    <scope>NUCLEOTIDE SEQUENCE [LARGE SCALE GENOMIC DNA]</scope>
    <source>
        <strain>K12 / MG1655 / ATCC 47076</strain>
    </source>
</reference>
<reference key="5">
    <citation type="journal article" date="2006" name="Mol. Syst. Biol.">
        <title>Highly accurate genome sequences of Escherichia coli K-12 strains MG1655 and W3110.</title>
        <authorList>
            <person name="Hayashi K."/>
            <person name="Morooka N."/>
            <person name="Yamamoto Y."/>
            <person name="Fujita K."/>
            <person name="Isono K."/>
            <person name="Choi S."/>
            <person name="Ohtsubo E."/>
            <person name="Baba T."/>
            <person name="Wanner B.L."/>
            <person name="Mori H."/>
            <person name="Horiuchi T."/>
        </authorList>
    </citation>
    <scope>NUCLEOTIDE SEQUENCE [LARGE SCALE GENOMIC DNA]</scope>
    <source>
        <strain>K12 / W3110 / ATCC 27325 / DSM 5911</strain>
    </source>
</reference>
<reference key="6">
    <citation type="journal article" date="1997" name="J. Biol. Chem.">
        <title>Function of the Escherichia coli msbB gene, a multicopy suppressor of htrB knockouts, in the acylation of lipid A. Acylation by MsbB follows laurate incorporation by HtrB.</title>
        <authorList>
            <person name="Clementz T."/>
            <person name="Zhou Z."/>
            <person name="Raetz C.R.H."/>
        </authorList>
    </citation>
    <scope>FUNCTION</scope>
    <scope>CATALYTIC ACTIVITY</scope>
    <scope>PATHWAY</scope>
    <scope>SUBCELLULAR LOCATION</scope>
    <source>
        <strain>K12</strain>
    </source>
</reference>
<reference key="7">
    <citation type="journal article" date="1999" name="J. Biol. Chem.">
        <title>Effect of cold shock on lipid A biosynthesis in Escherichia coli. Induction at 12 degrees C of an acyltransferase specific for palmitoleoyl-acyl carrier protein.</title>
        <authorList>
            <person name="Carty S.M."/>
            <person name="Sreekumar K.R."/>
            <person name="Raetz C.R."/>
        </authorList>
    </citation>
    <scope>CATALYTIC ACTIVITY</scope>
    <scope>PATHWAY</scope>
    <scope>GENE NAME</scope>
    <source>
        <strain>K12 / W3110 / ATCC 27325 / DSM 5911</strain>
    </source>
</reference>
<reference key="8">
    <citation type="journal article" date="2006" name="J. Biol. Chem.">
        <title>Expression cloning and periplasmic orientation of the Francisella novicida lipid A 4'-phosphatase LpxF.</title>
        <authorList>
            <person name="Wang X."/>
            <person name="McGrath S.C."/>
            <person name="Cotter R.J."/>
            <person name="Raetz C.R."/>
        </authorList>
    </citation>
    <scope>DISRUPTION PHENOTYPE</scope>
    <source>
        <strain>K12 / W3110 / ATCC 27325 / DSM 5911</strain>
    </source>
</reference>